<reference evidence="9" key="1">
    <citation type="journal article" date="2011" name="Cell">
        <title>Insight into structure and assembly of the nuclear pore complex by utilizing the genome of a eukaryotic thermophile.</title>
        <authorList>
            <person name="Amlacher S."/>
            <person name="Sarges P."/>
            <person name="Flemming D."/>
            <person name="van Noort V."/>
            <person name="Kunze R."/>
            <person name="Devos D.P."/>
            <person name="Arumugam M."/>
            <person name="Bork P."/>
            <person name="Hurt E."/>
        </authorList>
    </citation>
    <scope>NUCLEOTIDE SEQUENCE [LARGE SCALE GENOMIC DNA]</scope>
    <source>
        <strain evidence="9">DSM 1495 / CBS 144.50 / IMI 039719</strain>
    </source>
</reference>
<reference evidence="10" key="2">
    <citation type="journal article" date="2018" name="Science">
        <title>Structure of the DASH/Dam1 complex shows its role at the yeast kinetochore-microtubule interface.</title>
        <authorList>
            <person name="Jenni S."/>
            <person name="Harrison S.C."/>
        </authorList>
    </citation>
    <scope>STRUCTURE BY ELECTRON MICROSCOPY (4.50 ANGSTROMS) OF 49-158</scope>
    <scope>IDENTIFICATION IN THE DASH COMPLEX</scope>
</reference>
<name>DUO1_CHATD</name>
<sequence length="232" mass="25297">MADEMDFYSSDYHNDDAFETPSKPPTSTSGRPKGSGAQGGGGMRFDTEEAREAALRKELEGVRKINEVIEGMIGTLERAKGNMGTVSQTVTNATTLLNTWTRMLSQTEHNQRLILNPEWKGATQDLLELEAEERRRQEEVERRAAEAERRREEARRKAEEEERRRAAAAAAAAAPAGRSVGRGTTRGRVRGSGLTRGASSSASGSETTRTTSGIARGGFGYTRGTARYRGAK</sequence>
<comment type="function">
    <text evidence="2">Component of the DASH complex that connects microtubules with kinetochores and couples microtubule depolymerisation to chromosome movement; it is involved in retrieving kinetochores to the spindle poles before their re-orientation on the spindle in early mitosis and allows microtubule depolymerization to pull chromosomes apart and resist detachment during anaphase. Kinetochores, consisting of a centromere-associated inner segment and a microtubule-contacting outer segment, play a crucial role in chromosome segregation by mediating the physical connection between centromeric DNA and microtubules. Kinetochores also serve as an input point for the spindle assembly checkpoint, which delays anaphase until all chromosomes have bioriented on the mitotic spindle.</text>
</comment>
<comment type="subunit">
    <text evidence="1 2 5">Component of the DASH complex consisting of ASK1, DAD1, DAD2, DAD3, DAD4, DAM1, DUO1, HSK3, SPC19 and SPC34, with a stoichiometry of one copy of each subunit per complex (PubMed:29724956). Multiple DASH complexes oligomerize to form a ring that encircles spindle microtubules and organizes the rod-like NDC80 complexes of the outer kinetochore (PubMed:29724956). DASH complex oligomerization strengthens microtubule attachments (By similarity). On cytoplasmic microtubules, DASH complexes appear to form patches instead of rings (By similarity).</text>
</comment>
<comment type="subcellular location">
    <subcellularLocation>
        <location evidence="2">Nucleus</location>
    </subcellularLocation>
    <subcellularLocation>
        <location evidence="2">Cytoplasm</location>
        <location evidence="2">Cytoskeleton</location>
        <location evidence="2">Spindle pole</location>
    </subcellularLocation>
    <subcellularLocation>
        <location evidence="2">Chromosome</location>
        <location evidence="2">Centromere</location>
        <location evidence="2">Kinetochore</location>
    </subcellularLocation>
</comment>
<comment type="similarity">
    <text evidence="7">Belongs to the DASH complex DUO1 family.</text>
</comment>
<evidence type="ECO:0000250" key="1">
    <source>
        <dbReference type="UniProtKB" id="O74372"/>
    </source>
</evidence>
<evidence type="ECO:0000250" key="2">
    <source>
        <dbReference type="UniProtKB" id="P53168"/>
    </source>
</evidence>
<evidence type="ECO:0000255" key="3"/>
<evidence type="ECO:0000256" key="4">
    <source>
        <dbReference type="SAM" id="MobiDB-lite"/>
    </source>
</evidence>
<evidence type="ECO:0000269" key="5">
    <source>
    </source>
</evidence>
<evidence type="ECO:0000303" key="6">
    <source>
    </source>
</evidence>
<evidence type="ECO:0000305" key="7"/>
<evidence type="ECO:0000312" key="8">
    <source>
        <dbReference type="EMBL" id="EGS19809.1"/>
    </source>
</evidence>
<evidence type="ECO:0000312" key="9">
    <source>
        <dbReference type="Proteomes" id="UP000008066"/>
    </source>
</evidence>
<evidence type="ECO:0007744" key="10">
    <source>
        <dbReference type="PDB" id="6CFZ"/>
    </source>
</evidence>
<dbReference type="EMBL" id="GL988043">
    <property type="protein sequence ID" value="EGS19809.1"/>
    <property type="molecule type" value="Genomic_DNA"/>
</dbReference>
<dbReference type="RefSeq" id="XP_006694694.1">
    <property type="nucleotide sequence ID" value="XM_006694631.1"/>
</dbReference>
<dbReference type="PDB" id="6CFZ">
    <property type="method" value="EM"/>
    <property type="resolution" value="4.50 A"/>
    <property type="chains" value="D=49-158"/>
</dbReference>
<dbReference type="PDBsum" id="6CFZ"/>
<dbReference type="EMDB" id="EMD-7469"/>
<dbReference type="SMR" id="G0SAN7"/>
<dbReference type="IntAct" id="G0SAN7">
    <property type="interactions" value="1"/>
</dbReference>
<dbReference type="STRING" id="759272.G0SAN7"/>
<dbReference type="GeneID" id="18258331"/>
<dbReference type="KEGG" id="cthr:CTHT_0042930"/>
<dbReference type="eggNOG" id="ENOG502SCC0">
    <property type="taxonomic scope" value="Eukaryota"/>
</dbReference>
<dbReference type="HOGENOM" id="CLU_074400_1_0_1"/>
<dbReference type="OMA" id="QWQGASQ"/>
<dbReference type="OrthoDB" id="5599235at2759"/>
<dbReference type="Proteomes" id="UP000008066">
    <property type="component" value="Unassembled WGS sequence"/>
</dbReference>
<dbReference type="GO" id="GO:0005737">
    <property type="term" value="C:cytoplasm"/>
    <property type="evidence" value="ECO:0007669"/>
    <property type="project" value="UniProtKB-KW"/>
</dbReference>
<dbReference type="GO" id="GO:0042729">
    <property type="term" value="C:DASH complex"/>
    <property type="evidence" value="ECO:0000314"/>
    <property type="project" value="UniProtKB"/>
</dbReference>
<dbReference type="GO" id="GO:0000776">
    <property type="term" value="C:kinetochore"/>
    <property type="evidence" value="ECO:0000305"/>
    <property type="project" value="UniProtKB"/>
</dbReference>
<dbReference type="GO" id="GO:0005874">
    <property type="term" value="C:microtubule"/>
    <property type="evidence" value="ECO:0007669"/>
    <property type="project" value="UniProtKB-KW"/>
</dbReference>
<dbReference type="GO" id="GO:0072686">
    <property type="term" value="C:mitotic spindle"/>
    <property type="evidence" value="ECO:0000305"/>
    <property type="project" value="UniProtKB"/>
</dbReference>
<dbReference type="GO" id="GO:0000922">
    <property type="term" value="C:spindle pole"/>
    <property type="evidence" value="ECO:0007669"/>
    <property type="project" value="UniProtKB-SubCell"/>
</dbReference>
<dbReference type="GO" id="GO:0051315">
    <property type="term" value="P:attachment of mitotic spindle microtubules to kinetochore"/>
    <property type="evidence" value="ECO:0000305"/>
    <property type="project" value="UniProtKB"/>
</dbReference>
<dbReference type="GO" id="GO:0008608">
    <property type="term" value="P:attachment of spindle microtubules to kinetochore"/>
    <property type="evidence" value="ECO:0000250"/>
    <property type="project" value="UniProtKB"/>
</dbReference>
<dbReference type="GO" id="GO:0051301">
    <property type="term" value="P:cell division"/>
    <property type="evidence" value="ECO:0007669"/>
    <property type="project" value="UniProtKB-KW"/>
</dbReference>
<dbReference type="GO" id="GO:1990758">
    <property type="term" value="P:mitotic sister chromatid biorientation"/>
    <property type="evidence" value="ECO:0000250"/>
    <property type="project" value="UniProtKB"/>
</dbReference>
<dbReference type="GO" id="GO:1990976">
    <property type="term" value="P:protein transport along microtubule to mitotic spindle pole body"/>
    <property type="evidence" value="ECO:0000250"/>
    <property type="project" value="UniProtKB"/>
</dbReference>
<dbReference type="InterPro" id="IPR013960">
    <property type="entry name" value="DASH_Duo1"/>
</dbReference>
<dbReference type="PANTHER" id="PTHR28216">
    <property type="entry name" value="DASH COMPLEX SUBUNIT DUO1"/>
    <property type="match status" value="1"/>
</dbReference>
<dbReference type="PANTHER" id="PTHR28216:SF1">
    <property type="entry name" value="DASH COMPLEX SUBUNIT DUO1"/>
    <property type="match status" value="1"/>
</dbReference>
<dbReference type="Pfam" id="PF08651">
    <property type="entry name" value="DASH_Duo1"/>
    <property type="match status" value="1"/>
</dbReference>
<organism evidence="9">
    <name type="scientific">Chaetomium thermophilum (strain DSM 1495 / CBS 144.50 / IMI 039719)</name>
    <name type="common">Thermochaetoides thermophila</name>
    <dbReference type="NCBI Taxonomy" id="759272"/>
    <lineage>
        <taxon>Eukaryota</taxon>
        <taxon>Fungi</taxon>
        <taxon>Dikarya</taxon>
        <taxon>Ascomycota</taxon>
        <taxon>Pezizomycotina</taxon>
        <taxon>Sordariomycetes</taxon>
        <taxon>Sordariomycetidae</taxon>
        <taxon>Sordariales</taxon>
        <taxon>Chaetomiaceae</taxon>
        <taxon>Thermochaetoides</taxon>
    </lineage>
</organism>
<protein>
    <recommendedName>
        <fullName evidence="6">DASH complex subunit DUO1</fullName>
    </recommendedName>
    <alternativeName>
        <fullName evidence="2">Outer kinetochore protein DUO1</fullName>
    </alternativeName>
</protein>
<feature type="chain" id="PRO_0000459463" description="DASH complex subunit DUO1">
    <location>
        <begin position="1"/>
        <end position="232"/>
    </location>
</feature>
<feature type="region of interest" description="Disordered" evidence="4">
    <location>
        <begin position="1"/>
        <end position="44"/>
    </location>
</feature>
<feature type="region of interest" description="Disordered" evidence="4">
    <location>
        <begin position="133"/>
        <end position="232"/>
    </location>
</feature>
<feature type="coiled-coil region" evidence="3">
    <location>
        <begin position="128"/>
        <end position="171"/>
    </location>
</feature>
<feature type="compositionally biased region" description="Basic and acidic residues" evidence="4">
    <location>
        <begin position="133"/>
        <end position="165"/>
    </location>
</feature>
<feature type="compositionally biased region" description="Low complexity" evidence="4">
    <location>
        <begin position="167"/>
        <end position="183"/>
    </location>
</feature>
<feature type="compositionally biased region" description="Low complexity" evidence="4">
    <location>
        <begin position="191"/>
        <end position="213"/>
    </location>
</feature>
<keyword id="KW-0002">3D-structure</keyword>
<keyword id="KW-0131">Cell cycle</keyword>
<keyword id="KW-0132">Cell division</keyword>
<keyword id="KW-0137">Centromere</keyword>
<keyword id="KW-0158">Chromosome</keyword>
<keyword id="KW-0159">Chromosome partition</keyword>
<keyword id="KW-0175">Coiled coil</keyword>
<keyword id="KW-0963">Cytoplasm</keyword>
<keyword id="KW-0206">Cytoskeleton</keyword>
<keyword id="KW-0995">Kinetochore</keyword>
<keyword id="KW-0493">Microtubule</keyword>
<keyword id="KW-0498">Mitosis</keyword>
<keyword id="KW-0539">Nucleus</keyword>
<keyword id="KW-1185">Reference proteome</keyword>
<proteinExistence type="evidence at protein level"/>
<gene>
    <name evidence="6" type="primary">DUO1</name>
    <name evidence="8" type="ORF">CTHT_0042930</name>
</gene>
<accession>G0SAN7</accession>